<organism>
    <name type="scientific">Methylocella silvestris (strain DSM 15510 / CIP 108128 / LMG 27833 / NCIMB 13906 / BL2)</name>
    <dbReference type="NCBI Taxonomy" id="395965"/>
    <lineage>
        <taxon>Bacteria</taxon>
        <taxon>Pseudomonadati</taxon>
        <taxon>Pseudomonadota</taxon>
        <taxon>Alphaproteobacteria</taxon>
        <taxon>Hyphomicrobiales</taxon>
        <taxon>Beijerinckiaceae</taxon>
        <taxon>Methylocella</taxon>
    </lineage>
</organism>
<proteinExistence type="inferred from homology"/>
<dbReference type="EMBL" id="CP001280">
    <property type="protein sequence ID" value="ACK49304.1"/>
    <property type="molecule type" value="Genomic_DNA"/>
</dbReference>
<dbReference type="RefSeq" id="WP_012589374.1">
    <property type="nucleotide sequence ID" value="NC_011666.1"/>
</dbReference>
<dbReference type="SMR" id="B8EQN3"/>
<dbReference type="STRING" id="395965.Msil_0325"/>
<dbReference type="KEGG" id="msl:Msil_0325"/>
<dbReference type="eggNOG" id="COG0227">
    <property type="taxonomic scope" value="Bacteria"/>
</dbReference>
<dbReference type="HOGENOM" id="CLU_064548_4_2_5"/>
<dbReference type="OrthoDB" id="9805609at2"/>
<dbReference type="Proteomes" id="UP000002257">
    <property type="component" value="Chromosome"/>
</dbReference>
<dbReference type="GO" id="GO:0022625">
    <property type="term" value="C:cytosolic large ribosomal subunit"/>
    <property type="evidence" value="ECO:0007669"/>
    <property type="project" value="TreeGrafter"/>
</dbReference>
<dbReference type="GO" id="GO:0003735">
    <property type="term" value="F:structural constituent of ribosome"/>
    <property type="evidence" value="ECO:0007669"/>
    <property type="project" value="InterPro"/>
</dbReference>
<dbReference type="GO" id="GO:0006412">
    <property type="term" value="P:translation"/>
    <property type="evidence" value="ECO:0007669"/>
    <property type="project" value="UniProtKB-UniRule"/>
</dbReference>
<dbReference type="Gene3D" id="2.30.170.40">
    <property type="entry name" value="Ribosomal protein L28/L24"/>
    <property type="match status" value="1"/>
</dbReference>
<dbReference type="HAMAP" id="MF_00373">
    <property type="entry name" value="Ribosomal_bL28"/>
    <property type="match status" value="1"/>
</dbReference>
<dbReference type="InterPro" id="IPR026569">
    <property type="entry name" value="Ribosomal_bL28"/>
</dbReference>
<dbReference type="InterPro" id="IPR034704">
    <property type="entry name" value="Ribosomal_bL28/bL31-like_sf"/>
</dbReference>
<dbReference type="InterPro" id="IPR001383">
    <property type="entry name" value="Ribosomal_bL28_bact-type"/>
</dbReference>
<dbReference type="InterPro" id="IPR037147">
    <property type="entry name" value="Ribosomal_bL28_sf"/>
</dbReference>
<dbReference type="NCBIfam" id="TIGR00009">
    <property type="entry name" value="L28"/>
    <property type="match status" value="1"/>
</dbReference>
<dbReference type="PANTHER" id="PTHR13528">
    <property type="entry name" value="39S RIBOSOMAL PROTEIN L28, MITOCHONDRIAL"/>
    <property type="match status" value="1"/>
</dbReference>
<dbReference type="PANTHER" id="PTHR13528:SF2">
    <property type="entry name" value="LARGE RIBOSOMAL SUBUNIT PROTEIN BL28M"/>
    <property type="match status" value="1"/>
</dbReference>
<dbReference type="Pfam" id="PF00830">
    <property type="entry name" value="Ribosomal_L28"/>
    <property type="match status" value="1"/>
</dbReference>
<dbReference type="SUPFAM" id="SSF143800">
    <property type="entry name" value="L28p-like"/>
    <property type="match status" value="1"/>
</dbReference>
<gene>
    <name evidence="1" type="primary">rpmB</name>
    <name type="ordered locus">Msil_0325</name>
</gene>
<comment type="similarity">
    <text evidence="1">Belongs to the bacterial ribosomal protein bL28 family.</text>
</comment>
<protein>
    <recommendedName>
        <fullName evidence="1">Large ribosomal subunit protein bL28</fullName>
    </recommendedName>
    <alternativeName>
        <fullName evidence="2">50S ribosomal protein L28</fullName>
    </alternativeName>
</protein>
<accession>B8EQN3</accession>
<name>RL28_METSB</name>
<feature type="chain" id="PRO_1000195932" description="Large ribosomal subunit protein bL28">
    <location>
        <begin position="1"/>
        <end position="96"/>
    </location>
</feature>
<evidence type="ECO:0000255" key="1">
    <source>
        <dbReference type="HAMAP-Rule" id="MF_00373"/>
    </source>
</evidence>
<evidence type="ECO:0000305" key="2"/>
<keyword id="KW-1185">Reference proteome</keyword>
<keyword id="KW-0687">Ribonucleoprotein</keyword>
<keyword id="KW-0689">Ribosomal protein</keyword>
<reference key="1">
    <citation type="journal article" date="2010" name="J. Bacteriol.">
        <title>Complete genome sequence of the aerobic facultative methanotroph Methylocella silvestris BL2.</title>
        <authorList>
            <person name="Chen Y."/>
            <person name="Crombie A."/>
            <person name="Rahman M.T."/>
            <person name="Dedysh S.N."/>
            <person name="Liesack W."/>
            <person name="Stott M.B."/>
            <person name="Alam M."/>
            <person name="Theisen A.R."/>
            <person name="Murrell J.C."/>
            <person name="Dunfield P.F."/>
        </authorList>
    </citation>
    <scope>NUCLEOTIDE SEQUENCE [LARGE SCALE GENOMIC DNA]</scope>
    <source>
        <strain>DSM 15510 / CIP 108128 / LMG 27833 / NCIMB 13906 / BL2</strain>
    </source>
</reference>
<sequence length="96" mass="10539">MSRRCDLTGKAVQTGNLVSHSNHKTRTRFLPNLCNVTLISDVLQRKVRFRVAVAALRSVEHRGGLDAFLAKADDAELSLGARAIKREILKKQAAAS</sequence>